<dbReference type="EMBL" id="AB000550">
    <property type="protein sequence ID" value="BAA24420.1"/>
    <property type="molecule type" value="mRNA"/>
</dbReference>
<dbReference type="SMR" id="O54761"/>
<dbReference type="FunCoup" id="O54761">
    <property type="interactions" value="374"/>
</dbReference>
<dbReference type="MEROPS" id="I04.001"/>
<dbReference type="InParanoid" id="O54761"/>
<dbReference type="Proteomes" id="UP000005215">
    <property type="component" value="Unassembled WGS sequence"/>
</dbReference>
<dbReference type="GO" id="GO:0005615">
    <property type="term" value="C:extracellular space"/>
    <property type="evidence" value="ECO:0007669"/>
    <property type="project" value="InterPro"/>
</dbReference>
<dbReference type="GO" id="GO:0004867">
    <property type="term" value="F:serine-type endopeptidase inhibitor activity"/>
    <property type="evidence" value="ECO:0007669"/>
    <property type="project" value="UniProtKB-KW"/>
</dbReference>
<dbReference type="CDD" id="cd02056">
    <property type="entry name" value="serpinA1_A1AT"/>
    <property type="match status" value="1"/>
</dbReference>
<dbReference type="FunFam" id="2.30.39.10:FF:000003">
    <property type="entry name" value="alpha-1-antitrypsin isoform X1"/>
    <property type="match status" value="1"/>
</dbReference>
<dbReference type="FunFam" id="3.30.497.10:FF:000001">
    <property type="entry name" value="Serine protease inhibitor"/>
    <property type="match status" value="1"/>
</dbReference>
<dbReference type="FunFam" id="2.10.310.10:FF:000001">
    <property type="entry name" value="Serpin family A member 1"/>
    <property type="match status" value="1"/>
</dbReference>
<dbReference type="Gene3D" id="2.30.39.10">
    <property type="entry name" value="Alpha-1-antitrypsin, domain 1"/>
    <property type="match status" value="1"/>
</dbReference>
<dbReference type="Gene3D" id="3.30.497.10">
    <property type="entry name" value="Antithrombin, subunit I, domain 2"/>
    <property type="match status" value="1"/>
</dbReference>
<dbReference type="Gene3D" id="2.10.310.10">
    <property type="entry name" value="Serpins superfamily"/>
    <property type="match status" value="1"/>
</dbReference>
<dbReference type="InterPro" id="IPR023795">
    <property type="entry name" value="Serpin_CS"/>
</dbReference>
<dbReference type="InterPro" id="IPR023796">
    <property type="entry name" value="Serpin_dom"/>
</dbReference>
<dbReference type="InterPro" id="IPR000215">
    <property type="entry name" value="Serpin_fam"/>
</dbReference>
<dbReference type="InterPro" id="IPR036186">
    <property type="entry name" value="Serpin_sf"/>
</dbReference>
<dbReference type="InterPro" id="IPR042178">
    <property type="entry name" value="Serpin_sf_1"/>
</dbReference>
<dbReference type="InterPro" id="IPR042185">
    <property type="entry name" value="Serpin_sf_2"/>
</dbReference>
<dbReference type="PANTHER" id="PTHR11461:SF165">
    <property type="entry name" value="ALPHA-1-ANTITRYPSIN"/>
    <property type="match status" value="1"/>
</dbReference>
<dbReference type="PANTHER" id="PTHR11461">
    <property type="entry name" value="SERINE PROTEASE INHIBITOR, SERPIN"/>
    <property type="match status" value="1"/>
</dbReference>
<dbReference type="Pfam" id="PF00079">
    <property type="entry name" value="Serpin"/>
    <property type="match status" value="1"/>
</dbReference>
<dbReference type="SMART" id="SM00093">
    <property type="entry name" value="SERPIN"/>
    <property type="match status" value="1"/>
</dbReference>
<dbReference type="SUPFAM" id="SSF56574">
    <property type="entry name" value="Serpins"/>
    <property type="match status" value="1"/>
</dbReference>
<dbReference type="PROSITE" id="PS00284">
    <property type="entry name" value="SERPIN"/>
    <property type="match status" value="1"/>
</dbReference>
<name>ALMS_ICTTR</name>
<evidence type="ECO:0000250" key="1"/>
<evidence type="ECO:0000255" key="2"/>
<evidence type="ECO:0000305" key="3"/>
<reference key="1">
    <citation type="journal article" date="1997" name="Gene">
        <title>Expression of multiple alpha1-antitrypsin-like genes in hibernating species of the squirrel family.</title>
        <authorList>
            <person name="Takamatsu N."/>
            <person name="Kojima M."/>
            <person name="Taniyama M."/>
            <person name="Ohba K."/>
            <person name="Uematsu T."/>
            <person name="Segawa C."/>
            <person name="Tsutou S."/>
            <person name="Watanabe M."/>
            <person name="Kondo J."/>
            <person name="Kondo N."/>
            <person name="Shiba T."/>
        </authorList>
    </citation>
    <scope>NUCLEOTIDE SEQUENCE [MRNA]</scope>
    <source>
        <tissue>Liver</tissue>
    </source>
</reference>
<keyword id="KW-0325">Glycoprotein</keyword>
<keyword id="KW-0646">Protease inhibitor</keyword>
<keyword id="KW-1185">Reference proteome</keyword>
<keyword id="KW-0964">Secreted</keyword>
<keyword id="KW-0722">Serine protease inhibitor</keyword>
<keyword id="KW-0732">Signal</keyword>
<protein>
    <recommendedName>
        <fullName>Alpha-1-antitrypsin-like protein GS55-MS</fullName>
    </recommendedName>
</protein>
<organism>
    <name type="scientific">Ictidomys tridecemlineatus</name>
    <name type="common">Thirteen-lined ground squirrel</name>
    <name type="synonym">Spermophilus tridecemlineatus</name>
    <dbReference type="NCBI Taxonomy" id="43179"/>
    <lineage>
        <taxon>Eukaryota</taxon>
        <taxon>Metazoa</taxon>
        <taxon>Chordata</taxon>
        <taxon>Craniata</taxon>
        <taxon>Vertebrata</taxon>
        <taxon>Euteleostomi</taxon>
        <taxon>Mammalia</taxon>
        <taxon>Eutheria</taxon>
        <taxon>Euarchontoglires</taxon>
        <taxon>Glires</taxon>
        <taxon>Rodentia</taxon>
        <taxon>Sciuromorpha</taxon>
        <taxon>Sciuridae</taxon>
        <taxon>Xerinae</taxon>
        <taxon>Marmotini</taxon>
        <taxon>Ictidomys</taxon>
    </lineage>
</organism>
<comment type="function">
    <text evidence="1">Inhibitor of serine proteases. Its primary target is elastase, but it also has a moderate affinity for plasmin and thrombin (By similarity).</text>
</comment>
<comment type="subcellular location">
    <subcellularLocation>
        <location evidence="1">Secreted</location>
    </subcellularLocation>
</comment>
<comment type="domain">
    <text evidence="1">The reactive center loop (RCL) extends out from the body of the protein and directs binding to the target protease. The protease cleaves the serpin at the reactive site within the RCL, establishing a covalent linkage between the serpin reactive site and the active site of the protease. The resulting inactive serpin-protease complex is highly stable (By similarity).</text>
</comment>
<comment type="similarity">
    <text evidence="3">Belongs to the serpin family.</text>
</comment>
<accession>O54761</accession>
<sequence>MPSSISWGLLLLAGLSCLVAGSLAEDAQETGASKHDQEHPASHRIAPNLAEFALSLYRVLAHESNTTNIFFSPVSIAMALASLSLGTKADTHTQIMEGLGFNLTETAESDIHQGFQHLLQTLNKPNSQLQLTTGNGLFIDHNLKLLDKFLQDVKNLYHSEAFSTDFTNTEEAKKQINTYVEKGTQGKIVDLVKDLNRDSVLALVNYIFFKGKWEKPFEVDHTKEEDFHVDQVTTVRVPMMNRMGMFEVHYCSTLASWVLQMDYLGNATAIFLLPDEGKLQHLEDTITKEILAKFLKNRESSSVNLHFPKLNISGTMDLKPVLTRLGITNVFSYKADLSGITEDDPLRVSQALHKAVLTIDERGTEAAGATFLEMMPMSLPPEVKFDKPFLVVIIEHSTKSPLFVGKVVNPTLH</sequence>
<feature type="signal peptide" evidence="2">
    <location>
        <begin position="1"/>
        <end position="24"/>
    </location>
</feature>
<feature type="chain" id="PRO_0000032400" description="Alpha-1-antitrypsin-like protein GS55-MS">
    <location>
        <begin position="25"/>
        <end position="413"/>
    </location>
</feature>
<feature type="region of interest" description="RCL">
    <location>
        <begin position="368"/>
        <end position="387"/>
    </location>
</feature>
<feature type="site" description="Reactive bond" evidence="1">
    <location>
        <begin position="377"/>
        <end position="378"/>
    </location>
</feature>
<feature type="glycosylation site" description="N-linked (GlcNAc...) asparagine" evidence="2">
    <location>
        <position position="65"/>
    </location>
</feature>
<feature type="glycosylation site" description="N-linked (GlcNAc...) asparagine" evidence="2">
    <location>
        <position position="102"/>
    </location>
</feature>
<feature type="glycosylation site" description="N-linked (GlcNAc...) asparagine" evidence="2">
    <location>
        <position position="266"/>
    </location>
</feature>
<proteinExistence type="evidence at transcript level"/>